<dbReference type="EMBL" id="CP001635">
    <property type="protein sequence ID" value="ACS19720.1"/>
    <property type="molecule type" value="Genomic_DNA"/>
</dbReference>
<dbReference type="SMR" id="C5CPY1"/>
<dbReference type="STRING" id="543728.Vapar_3101"/>
<dbReference type="KEGG" id="vap:Vapar_3101"/>
<dbReference type="eggNOG" id="COG1327">
    <property type="taxonomic scope" value="Bacteria"/>
</dbReference>
<dbReference type="HOGENOM" id="CLU_108412_0_0_4"/>
<dbReference type="OrthoDB" id="9807461at2"/>
<dbReference type="GO" id="GO:0005524">
    <property type="term" value="F:ATP binding"/>
    <property type="evidence" value="ECO:0007669"/>
    <property type="project" value="UniProtKB-KW"/>
</dbReference>
<dbReference type="GO" id="GO:0003677">
    <property type="term" value="F:DNA binding"/>
    <property type="evidence" value="ECO:0007669"/>
    <property type="project" value="UniProtKB-KW"/>
</dbReference>
<dbReference type="GO" id="GO:0008270">
    <property type="term" value="F:zinc ion binding"/>
    <property type="evidence" value="ECO:0007669"/>
    <property type="project" value="UniProtKB-UniRule"/>
</dbReference>
<dbReference type="GO" id="GO:0045892">
    <property type="term" value="P:negative regulation of DNA-templated transcription"/>
    <property type="evidence" value="ECO:0007669"/>
    <property type="project" value="UniProtKB-UniRule"/>
</dbReference>
<dbReference type="HAMAP" id="MF_00440">
    <property type="entry name" value="NrdR"/>
    <property type="match status" value="1"/>
</dbReference>
<dbReference type="InterPro" id="IPR005144">
    <property type="entry name" value="ATP-cone_dom"/>
</dbReference>
<dbReference type="InterPro" id="IPR055173">
    <property type="entry name" value="NrdR-like_N"/>
</dbReference>
<dbReference type="InterPro" id="IPR003796">
    <property type="entry name" value="RNR_NrdR-like"/>
</dbReference>
<dbReference type="NCBIfam" id="TIGR00244">
    <property type="entry name" value="transcriptional regulator NrdR"/>
    <property type="match status" value="1"/>
</dbReference>
<dbReference type="PANTHER" id="PTHR30455">
    <property type="entry name" value="TRANSCRIPTIONAL REPRESSOR NRDR"/>
    <property type="match status" value="1"/>
</dbReference>
<dbReference type="PANTHER" id="PTHR30455:SF2">
    <property type="entry name" value="TRANSCRIPTIONAL REPRESSOR NRDR"/>
    <property type="match status" value="1"/>
</dbReference>
<dbReference type="Pfam" id="PF03477">
    <property type="entry name" value="ATP-cone"/>
    <property type="match status" value="1"/>
</dbReference>
<dbReference type="Pfam" id="PF22811">
    <property type="entry name" value="Zn_ribbon_NrdR"/>
    <property type="match status" value="1"/>
</dbReference>
<dbReference type="PROSITE" id="PS51161">
    <property type="entry name" value="ATP_CONE"/>
    <property type="match status" value="1"/>
</dbReference>
<sequence length="147" mass="17093">MKCPFCGHLETQVVETRVSEDADFVRRRRQCSACDKRFTTYERPDVNFPVVVKKDGSRADFESGKVRASMMLALRKRPVSIEQIDNALLRIEQKLLASGLREIDSTKVGELVMRELKKLDKVAYVRFASVYRSFEDVDEFRQLLRDI</sequence>
<evidence type="ECO:0000255" key="1">
    <source>
        <dbReference type="HAMAP-Rule" id="MF_00440"/>
    </source>
</evidence>
<keyword id="KW-0067">ATP-binding</keyword>
<keyword id="KW-0238">DNA-binding</keyword>
<keyword id="KW-0479">Metal-binding</keyword>
<keyword id="KW-0547">Nucleotide-binding</keyword>
<keyword id="KW-0678">Repressor</keyword>
<keyword id="KW-0804">Transcription</keyword>
<keyword id="KW-0805">Transcription regulation</keyword>
<keyword id="KW-0862">Zinc</keyword>
<keyword id="KW-0863">Zinc-finger</keyword>
<accession>C5CPY1</accession>
<comment type="function">
    <text evidence="1">Negatively regulates transcription of bacterial ribonucleotide reductase nrd genes and operons by binding to NrdR-boxes.</text>
</comment>
<comment type="cofactor">
    <cofactor evidence="1">
        <name>Zn(2+)</name>
        <dbReference type="ChEBI" id="CHEBI:29105"/>
    </cofactor>
    <text evidence="1">Binds 1 zinc ion.</text>
</comment>
<comment type="similarity">
    <text evidence="1">Belongs to the NrdR family.</text>
</comment>
<reference key="1">
    <citation type="journal article" date="2011" name="J. Bacteriol.">
        <title>Complete genome sequence of the metabolically versatile plant growth-promoting endophyte, Variovorax paradoxus S110.</title>
        <authorList>
            <person name="Han J.I."/>
            <person name="Choi H.K."/>
            <person name="Lee S.W."/>
            <person name="Orwin P.M."/>
            <person name="Kim J."/>
            <person name="Laroe S.L."/>
            <person name="Kim T.G."/>
            <person name="O'Neil J."/>
            <person name="Leadbetter J.R."/>
            <person name="Lee S.Y."/>
            <person name="Hur C.G."/>
            <person name="Spain J.C."/>
            <person name="Ovchinnikova G."/>
            <person name="Goodwin L."/>
            <person name="Han C."/>
        </authorList>
    </citation>
    <scope>NUCLEOTIDE SEQUENCE [LARGE SCALE GENOMIC DNA]</scope>
    <source>
        <strain>S110</strain>
    </source>
</reference>
<name>NRDR_VARPS</name>
<gene>
    <name evidence="1" type="primary">nrdR</name>
    <name type="ordered locus">Vapar_3101</name>
</gene>
<organism>
    <name type="scientific">Variovorax paradoxus (strain S110)</name>
    <dbReference type="NCBI Taxonomy" id="543728"/>
    <lineage>
        <taxon>Bacteria</taxon>
        <taxon>Pseudomonadati</taxon>
        <taxon>Pseudomonadota</taxon>
        <taxon>Betaproteobacteria</taxon>
        <taxon>Burkholderiales</taxon>
        <taxon>Comamonadaceae</taxon>
        <taxon>Variovorax</taxon>
    </lineage>
</organism>
<feature type="chain" id="PRO_1000206129" description="Transcriptional repressor NrdR">
    <location>
        <begin position="1"/>
        <end position="147"/>
    </location>
</feature>
<feature type="domain" description="ATP-cone" evidence="1">
    <location>
        <begin position="49"/>
        <end position="139"/>
    </location>
</feature>
<feature type="zinc finger region" evidence="1">
    <location>
        <begin position="3"/>
        <end position="34"/>
    </location>
</feature>
<proteinExistence type="inferred from homology"/>
<protein>
    <recommendedName>
        <fullName evidence="1">Transcriptional repressor NrdR</fullName>
    </recommendedName>
</protein>